<reference key="1">
    <citation type="journal article" date="2003" name="Nature">
        <title>The genome of a motile marine Synechococcus.</title>
        <authorList>
            <person name="Palenik B."/>
            <person name="Brahamsha B."/>
            <person name="Larimer F.W."/>
            <person name="Land M.L."/>
            <person name="Hauser L."/>
            <person name="Chain P."/>
            <person name="Lamerdin J.E."/>
            <person name="Regala W."/>
            <person name="Allen E.E."/>
            <person name="McCarren J."/>
            <person name="Paulsen I.T."/>
            <person name="Dufresne A."/>
            <person name="Partensky F."/>
            <person name="Webb E.A."/>
            <person name="Waterbury J."/>
        </authorList>
    </citation>
    <scope>NUCLEOTIDE SEQUENCE [LARGE SCALE GENOMIC DNA]</scope>
    <source>
        <strain>WH8102</strain>
    </source>
</reference>
<comment type="function">
    <text evidence="1">An essential GTPase which binds GTP, GDP and possibly (p)ppGpp with moderate affinity, with high nucleotide exchange rates and a fairly low GTP hydrolysis rate. Plays a role in control of the cell cycle, stress response, ribosome biogenesis and in those bacteria that undergo differentiation, in morphogenesis control.</text>
</comment>
<comment type="cofactor">
    <cofactor evidence="1">
        <name>Mg(2+)</name>
        <dbReference type="ChEBI" id="CHEBI:18420"/>
    </cofactor>
</comment>
<comment type="subunit">
    <text evidence="1">Monomer.</text>
</comment>
<comment type="subcellular location">
    <subcellularLocation>
        <location evidence="1">Cytoplasm</location>
    </subcellularLocation>
</comment>
<comment type="similarity">
    <text evidence="1">Belongs to the TRAFAC class OBG-HflX-like GTPase superfamily. OBG GTPase family.</text>
</comment>
<name>OBG_PARMW</name>
<keyword id="KW-0067">ATP-binding</keyword>
<keyword id="KW-0963">Cytoplasm</keyword>
<keyword id="KW-0342">GTP-binding</keyword>
<keyword id="KW-0378">Hydrolase</keyword>
<keyword id="KW-0460">Magnesium</keyword>
<keyword id="KW-0479">Metal-binding</keyword>
<keyword id="KW-0547">Nucleotide-binding</keyword>
<evidence type="ECO:0000255" key="1">
    <source>
        <dbReference type="HAMAP-Rule" id="MF_01454"/>
    </source>
</evidence>
<evidence type="ECO:0000255" key="2">
    <source>
        <dbReference type="PROSITE-ProRule" id="PRU01231"/>
    </source>
</evidence>
<protein>
    <recommendedName>
        <fullName evidence="1">GTPase Obg</fullName>
        <ecNumber evidence="1">3.6.5.-</ecNumber>
    </recommendedName>
    <alternativeName>
        <fullName evidence="1">GTP-binding protein Obg</fullName>
    </alternativeName>
</protein>
<gene>
    <name evidence="1" type="primary">obg</name>
    <name type="ordered locus">SYNW1928</name>
</gene>
<feature type="chain" id="PRO_0000386341" description="GTPase Obg">
    <location>
        <begin position="1"/>
        <end position="330"/>
    </location>
</feature>
<feature type="domain" description="Obg" evidence="2">
    <location>
        <begin position="1"/>
        <end position="159"/>
    </location>
</feature>
<feature type="domain" description="OBG-type G" evidence="1">
    <location>
        <begin position="160"/>
        <end position="328"/>
    </location>
</feature>
<feature type="binding site" evidence="1">
    <location>
        <begin position="166"/>
        <end position="173"/>
    </location>
    <ligand>
        <name>ATP</name>
        <dbReference type="ChEBI" id="CHEBI:30616"/>
    </ligand>
</feature>
<feature type="binding site" evidence="1">
    <location>
        <position position="173"/>
    </location>
    <ligand>
        <name>Mg(2+)</name>
        <dbReference type="ChEBI" id="CHEBI:18420"/>
    </ligand>
</feature>
<feature type="binding site" evidence="1">
    <location>
        <begin position="191"/>
        <end position="195"/>
    </location>
    <ligand>
        <name>ATP</name>
        <dbReference type="ChEBI" id="CHEBI:30616"/>
    </ligand>
</feature>
<feature type="binding site" evidence="1">
    <location>
        <position position="193"/>
    </location>
    <ligand>
        <name>Mg(2+)</name>
        <dbReference type="ChEBI" id="CHEBI:18420"/>
    </ligand>
</feature>
<feature type="binding site" evidence="1">
    <location>
        <begin position="213"/>
        <end position="216"/>
    </location>
    <ligand>
        <name>ATP</name>
        <dbReference type="ChEBI" id="CHEBI:30616"/>
    </ligand>
</feature>
<feature type="binding site" evidence="1">
    <location>
        <begin position="280"/>
        <end position="283"/>
    </location>
    <ligand>
        <name>ATP</name>
        <dbReference type="ChEBI" id="CHEBI:30616"/>
    </ligand>
</feature>
<feature type="binding site" evidence="1">
    <location>
        <begin position="309"/>
        <end position="311"/>
    </location>
    <ligand>
        <name>ATP</name>
        <dbReference type="ChEBI" id="CHEBI:30616"/>
    </ligand>
</feature>
<accession>Q7U4Y5</accession>
<dbReference type="EC" id="3.6.5.-" evidence="1"/>
<dbReference type="EMBL" id="BX569694">
    <property type="protein sequence ID" value="CAE08443.1"/>
    <property type="molecule type" value="Genomic_DNA"/>
</dbReference>
<dbReference type="RefSeq" id="WP_011128786.1">
    <property type="nucleotide sequence ID" value="NC_005070.1"/>
</dbReference>
<dbReference type="SMR" id="Q7U4Y5"/>
<dbReference type="STRING" id="84588.SYNW1928"/>
<dbReference type="KEGG" id="syw:SYNW1928"/>
<dbReference type="eggNOG" id="COG0536">
    <property type="taxonomic scope" value="Bacteria"/>
</dbReference>
<dbReference type="HOGENOM" id="CLU_011747_2_3_3"/>
<dbReference type="Proteomes" id="UP000001422">
    <property type="component" value="Chromosome"/>
</dbReference>
<dbReference type="GO" id="GO:0005737">
    <property type="term" value="C:cytoplasm"/>
    <property type="evidence" value="ECO:0007669"/>
    <property type="project" value="UniProtKB-SubCell"/>
</dbReference>
<dbReference type="GO" id="GO:0005524">
    <property type="term" value="F:ATP binding"/>
    <property type="evidence" value="ECO:0007669"/>
    <property type="project" value="UniProtKB-KW"/>
</dbReference>
<dbReference type="GO" id="GO:0005525">
    <property type="term" value="F:GTP binding"/>
    <property type="evidence" value="ECO:0007669"/>
    <property type="project" value="UniProtKB-UniRule"/>
</dbReference>
<dbReference type="GO" id="GO:0003924">
    <property type="term" value="F:GTPase activity"/>
    <property type="evidence" value="ECO:0007669"/>
    <property type="project" value="UniProtKB-UniRule"/>
</dbReference>
<dbReference type="GO" id="GO:0000287">
    <property type="term" value="F:magnesium ion binding"/>
    <property type="evidence" value="ECO:0007669"/>
    <property type="project" value="InterPro"/>
</dbReference>
<dbReference type="GO" id="GO:0042254">
    <property type="term" value="P:ribosome biogenesis"/>
    <property type="evidence" value="ECO:0007669"/>
    <property type="project" value="UniProtKB-UniRule"/>
</dbReference>
<dbReference type="CDD" id="cd01898">
    <property type="entry name" value="Obg"/>
    <property type="match status" value="1"/>
</dbReference>
<dbReference type="FunFam" id="2.70.210.12:FF:000001">
    <property type="entry name" value="GTPase Obg"/>
    <property type="match status" value="1"/>
</dbReference>
<dbReference type="Gene3D" id="2.70.210.12">
    <property type="entry name" value="GTP1/OBG domain"/>
    <property type="match status" value="1"/>
</dbReference>
<dbReference type="Gene3D" id="3.40.50.300">
    <property type="entry name" value="P-loop containing nucleotide triphosphate hydrolases"/>
    <property type="match status" value="1"/>
</dbReference>
<dbReference type="HAMAP" id="MF_01454">
    <property type="entry name" value="GTPase_Obg"/>
    <property type="match status" value="1"/>
</dbReference>
<dbReference type="InterPro" id="IPR031167">
    <property type="entry name" value="G_OBG"/>
</dbReference>
<dbReference type="InterPro" id="IPR006073">
    <property type="entry name" value="GTP-bd"/>
</dbReference>
<dbReference type="InterPro" id="IPR014100">
    <property type="entry name" value="GTP-bd_Obg/CgtA"/>
</dbReference>
<dbReference type="InterPro" id="IPR006169">
    <property type="entry name" value="GTP1_OBG_dom"/>
</dbReference>
<dbReference type="InterPro" id="IPR036726">
    <property type="entry name" value="GTP1_OBG_dom_sf"/>
</dbReference>
<dbReference type="InterPro" id="IPR045086">
    <property type="entry name" value="OBG_GTPase"/>
</dbReference>
<dbReference type="InterPro" id="IPR027417">
    <property type="entry name" value="P-loop_NTPase"/>
</dbReference>
<dbReference type="NCBIfam" id="TIGR02729">
    <property type="entry name" value="Obg_CgtA"/>
    <property type="match status" value="1"/>
</dbReference>
<dbReference type="NCBIfam" id="NF008955">
    <property type="entry name" value="PRK12297.1"/>
    <property type="match status" value="1"/>
</dbReference>
<dbReference type="NCBIfam" id="NF008956">
    <property type="entry name" value="PRK12299.1"/>
    <property type="match status" value="1"/>
</dbReference>
<dbReference type="PANTHER" id="PTHR11702">
    <property type="entry name" value="DEVELOPMENTALLY REGULATED GTP-BINDING PROTEIN-RELATED"/>
    <property type="match status" value="1"/>
</dbReference>
<dbReference type="PANTHER" id="PTHR11702:SF31">
    <property type="entry name" value="MITOCHONDRIAL RIBOSOME-ASSOCIATED GTPASE 2"/>
    <property type="match status" value="1"/>
</dbReference>
<dbReference type="Pfam" id="PF01018">
    <property type="entry name" value="GTP1_OBG"/>
    <property type="match status" value="1"/>
</dbReference>
<dbReference type="Pfam" id="PF01926">
    <property type="entry name" value="MMR_HSR1"/>
    <property type="match status" value="1"/>
</dbReference>
<dbReference type="PIRSF" id="PIRSF002401">
    <property type="entry name" value="GTP_bd_Obg/CgtA"/>
    <property type="match status" value="1"/>
</dbReference>
<dbReference type="PRINTS" id="PR00326">
    <property type="entry name" value="GTP1OBG"/>
</dbReference>
<dbReference type="SUPFAM" id="SSF82051">
    <property type="entry name" value="Obg GTP-binding protein N-terminal domain"/>
    <property type="match status" value="1"/>
</dbReference>
<dbReference type="SUPFAM" id="SSF52540">
    <property type="entry name" value="P-loop containing nucleoside triphosphate hydrolases"/>
    <property type="match status" value="1"/>
</dbReference>
<dbReference type="PROSITE" id="PS51710">
    <property type="entry name" value="G_OBG"/>
    <property type="match status" value="1"/>
</dbReference>
<dbReference type="PROSITE" id="PS51883">
    <property type="entry name" value="OBG"/>
    <property type="match status" value="1"/>
</dbReference>
<sequence>MQFIDQARITVRGGRGGDGIAAFRREKYVPAGGPSGGDGGHGGPVVLEADSNLQTLLDFKYKRLFAADDGRRGGPNKCTGASGRDLVIKVPCGTEVRHLATGILLGDLTDPGERLTVAFGGRGGLGNAHYLSNRNRAPEKFTEGRDGEEWPLQLELKLLAEVGIIGLPNAGKSTLIAVLSAARPKIADYPFTTLVPNLGVVRRPSGDGTVFADIPGLIAGAAQGAGLGHDFLRHIERTRLLIHVVDAGADDPVGDLRVVEKELEAYGHGLVDRPRLLVLNKQELLLDEQLPELSNELEQVSGRAPLCISAAMGRNLDQLLERVWKELGIA</sequence>
<proteinExistence type="inferred from homology"/>
<organism>
    <name type="scientific">Parasynechococcus marenigrum (strain WH8102)</name>
    <dbReference type="NCBI Taxonomy" id="84588"/>
    <lineage>
        <taxon>Bacteria</taxon>
        <taxon>Bacillati</taxon>
        <taxon>Cyanobacteriota</taxon>
        <taxon>Cyanophyceae</taxon>
        <taxon>Synechococcales</taxon>
        <taxon>Prochlorococcaceae</taxon>
        <taxon>Parasynechococcus</taxon>
        <taxon>Parasynechococcus marenigrum</taxon>
    </lineage>
</organism>